<reference key="1">
    <citation type="journal article" date="2007" name="Environ. Microbiol.">
        <title>Whole-genome analysis of the ammonia-oxidizing bacterium, Nitrosomonas eutropha C91: implications for niche adaptation.</title>
        <authorList>
            <person name="Stein L.Y."/>
            <person name="Arp D.J."/>
            <person name="Berube P.M."/>
            <person name="Chain P.S."/>
            <person name="Hauser L."/>
            <person name="Jetten M.S."/>
            <person name="Klotz M.G."/>
            <person name="Larimer F.W."/>
            <person name="Norton J.M."/>
            <person name="Op den Camp H.J.M."/>
            <person name="Shin M."/>
            <person name="Wei X."/>
        </authorList>
    </citation>
    <scope>NUCLEOTIDE SEQUENCE [LARGE SCALE GENOMIC DNA]</scope>
    <source>
        <strain>DSM 101675 / C91 / Nm57</strain>
    </source>
</reference>
<accession>Q0AII6</accession>
<feature type="chain" id="PRO_1000055649" description="Large ribosomal subunit protein uL14">
    <location>
        <begin position="1"/>
        <end position="122"/>
    </location>
</feature>
<proteinExistence type="inferred from homology"/>
<dbReference type="EMBL" id="CP000450">
    <property type="protein sequence ID" value="ABI58840.1"/>
    <property type="molecule type" value="Genomic_DNA"/>
</dbReference>
<dbReference type="RefSeq" id="WP_011633682.1">
    <property type="nucleotide sequence ID" value="NC_008344.1"/>
</dbReference>
<dbReference type="SMR" id="Q0AII6"/>
<dbReference type="STRING" id="335283.Neut_0568"/>
<dbReference type="KEGG" id="net:Neut_0568"/>
<dbReference type="eggNOG" id="COG0093">
    <property type="taxonomic scope" value="Bacteria"/>
</dbReference>
<dbReference type="HOGENOM" id="CLU_095071_2_1_4"/>
<dbReference type="OrthoDB" id="9806379at2"/>
<dbReference type="Proteomes" id="UP000001966">
    <property type="component" value="Chromosome"/>
</dbReference>
<dbReference type="GO" id="GO:0022625">
    <property type="term" value="C:cytosolic large ribosomal subunit"/>
    <property type="evidence" value="ECO:0007669"/>
    <property type="project" value="TreeGrafter"/>
</dbReference>
<dbReference type="GO" id="GO:0070180">
    <property type="term" value="F:large ribosomal subunit rRNA binding"/>
    <property type="evidence" value="ECO:0007669"/>
    <property type="project" value="TreeGrafter"/>
</dbReference>
<dbReference type="GO" id="GO:0003735">
    <property type="term" value="F:structural constituent of ribosome"/>
    <property type="evidence" value="ECO:0007669"/>
    <property type="project" value="InterPro"/>
</dbReference>
<dbReference type="GO" id="GO:0006412">
    <property type="term" value="P:translation"/>
    <property type="evidence" value="ECO:0007669"/>
    <property type="project" value="UniProtKB-UniRule"/>
</dbReference>
<dbReference type="CDD" id="cd00337">
    <property type="entry name" value="Ribosomal_uL14"/>
    <property type="match status" value="1"/>
</dbReference>
<dbReference type="FunFam" id="2.40.150.20:FF:000001">
    <property type="entry name" value="50S ribosomal protein L14"/>
    <property type="match status" value="1"/>
</dbReference>
<dbReference type="Gene3D" id="2.40.150.20">
    <property type="entry name" value="Ribosomal protein L14"/>
    <property type="match status" value="1"/>
</dbReference>
<dbReference type="HAMAP" id="MF_01367">
    <property type="entry name" value="Ribosomal_uL14"/>
    <property type="match status" value="1"/>
</dbReference>
<dbReference type="InterPro" id="IPR000218">
    <property type="entry name" value="Ribosomal_uL14"/>
</dbReference>
<dbReference type="InterPro" id="IPR005745">
    <property type="entry name" value="Ribosomal_uL14_bac-type"/>
</dbReference>
<dbReference type="InterPro" id="IPR019972">
    <property type="entry name" value="Ribosomal_uL14_CS"/>
</dbReference>
<dbReference type="InterPro" id="IPR036853">
    <property type="entry name" value="Ribosomal_uL14_sf"/>
</dbReference>
<dbReference type="NCBIfam" id="TIGR01067">
    <property type="entry name" value="rplN_bact"/>
    <property type="match status" value="1"/>
</dbReference>
<dbReference type="PANTHER" id="PTHR11761">
    <property type="entry name" value="50S/60S RIBOSOMAL PROTEIN L14/L23"/>
    <property type="match status" value="1"/>
</dbReference>
<dbReference type="PANTHER" id="PTHR11761:SF3">
    <property type="entry name" value="LARGE RIBOSOMAL SUBUNIT PROTEIN UL14M"/>
    <property type="match status" value="1"/>
</dbReference>
<dbReference type="Pfam" id="PF00238">
    <property type="entry name" value="Ribosomal_L14"/>
    <property type="match status" value="1"/>
</dbReference>
<dbReference type="SMART" id="SM01374">
    <property type="entry name" value="Ribosomal_L14"/>
    <property type="match status" value="1"/>
</dbReference>
<dbReference type="SUPFAM" id="SSF50193">
    <property type="entry name" value="Ribosomal protein L14"/>
    <property type="match status" value="1"/>
</dbReference>
<dbReference type="PROSITE" id="PS00049">
    <property type="entry name" value="RIBOSOMAL_L14"/>
    <property type="match status" value="1"/>
</dbReference>
<gene>
    <name evidence="1" type="primary">rplN</name>
    <name type="ordered locus">Neut_0568</name>
</gene>
<evidence type="ECO:0000255" key="1">
    <source>
        <dbReference type="HAMAP-Rule" id="MF_01367"/>
    </source>
</evidence>
<evidence type="ECO:0000305" key="2"/>
<sequence>MIQMQSLLKVADNTGARTVMCIKVLGGSKRRFAGIGDVIKVAVKDAAPRGRIKKGEVYNAVIVRTAKGIRRSDGSLVKFDTNAAVILNNKLEPIGTRIFGPVTRELRTAKFMKIVSLAPEVI</sequence>
<name>RL14_NITEC</name>
<organism>
    <name type="scientific">Nitrosomonas eutropha (strain DSM 101675 / C91 / Nm57)</name>
    <dbReference type="NCBI Taxonomy" id="335283"/>
    <lineage>
        <taxon>Bacteria</taxon>
        <taxon>Pseudomonadati</taxon>
        <taxon>Pseudomonadota</taxon>
        <taxon>Betaproteobacteria</taxon>
        <taxon>Nitrosomonadales</taxon>
        <taxon>Nitrosomonadaceae</taxon>
        <taxon>Nitrosomonas</taxon>
    </lineage>
</organism>
<protein>
    <recommendedName>
        <fullName evidence="1">Large ribosomal subunit protein uL14</fullName>
    </recommendedName>
    <alternativeName>
        <fullName evidence="2">50S ribosomal protein L14</fullName>
    </alternativeName>
</protein>
<comment type="function">
    <text evidence="1">Binds to 23S rRNA. Forms part of two intersubunit bridges in the 70S ribosome.</text>
</comment>
<comment type="subunit">
    <text evidence="1">Part of the 50S ribosomal subunit. Forms a cluster with proteins L3 and L19. In the 70S ribosome, L14 and L19 interact and together make contacts with the 16S rRNA in bridges B5 and B8.</text>
</comment>
<comment type="similarity">
    <text evidence="1">Belongs to the universal ribosomal protein uL14 family.</text>
</comment>
<keyword id="KW-0687">Ribonucleoprotein</keyword>
<keyword id="KW-0689">Ribosomal protein</keyword>
<keyword id="KW-0694">RNA-binding</keyword>
<keyword id="KW-0699">rRNA-binding</keyword>